<organism>
    <name type="scientific">Staphylococcus aureus (strain JH1)</name>
    <dbReference type="NCBI Taxonomy" id="359787"/>
    <lineage>
        <taxon>Bacteria</taxon>
        <taxon>Bacillati</taxon>
        <taxon>Bacillota</taxon>
        <taxon>Bacilli</taxon>
        <taxon>Bacillales</taxon>
        <taxon>Staphylococcaceae</taxon>
        <taxon>Staphylococcus</taxon>
    </lineage>
</organism>
<reference key="1">
    <citation type="submission" date="2007-06" db="EMBL/GenBank/DDBJ databases">
        <title>Complete sequence of chromosome of Staphylococcus aureus subsp. aureus JH1.</title>
        <authorList>
            <consortium name="US DOE Joint Genome Institute"/>
            <person name="Copeland A."/>
            <person name="Lucas S."/>
            <person name="Lapidus A."/>
            <person name="Barry K."/>
            <person name="Detter J.C."/>
            <person name="Glavina del Rio T."/>
            <person name="Hammon N."/>
            <person name="Israni S."/>
            <person name="Dalin E."/>
            <person name="Tice H."/>
            <person name="Pitluck S."/>
            <person name="Chain P."/>
            <person name="Malfatti S."/>
            <person name="Shin M."/>
            <person name="Vergez L."/>
            <person name="Schmutz J."/>
            <person name="Larimer F."/>
            <person name="Land M."/>
            <person name="Hauser L."/>
            <person name="Kyrpides N."/>
            <person name="Ivanova N."/>
            <person name="Tomasz A."/>
            <person name="Richardson P."/>
        </authorList>
    </citation>
    <scope>NUCLEOTIDE SEQUENCE [LARGE SCALE GENOMIC DNA]</scope>
    <source>
        <strain>JH1</strain>
    </source>
</reference>
<sequence length="334" mass="37646">MNERMVDQSMHSEETDFELSLRPTRLRQYIGQNSIKSNLEVFIKAAKLRHEPLDHVLLFGPPGLGKTTLSNIIANEMEVNIRTVSGPSLERPGDLAAILSGLQPGDVLFIDEIHRLSSVVEEVLYPAMEDFFLDIIIGKGDEARSIRIDLPPFTLVGATTRAGSLTGPLRDRFGVHLRLEYYNESDLKEIIIRTAEVLGTGIDEESAIELAKRSRGTPRVANRLLKRVRDFQQVNEDEQIYIETTKHALGLLQVDQHGLDYIDHKMMNCIIKQYNGGPVGLDTIAVTIGEERITIEDVYEPFLIQKGFLERTPRGRKATPLAYEHFAKSNEERG</sequence>
<dbReference type="EC" id="3.6.4.-" evidence="1"/>
<dbReference type="EMBL" id="CP000736">
    <property type="protein sequence ID" value="ABR52577.1"/>
    <property type="molecule type" value="Genomic_DNA"/>
</dbReference>
<dbReference type="SMR" id="A6U2A9"/>
<dbReference type="KEGG" id="sah:SaurJH1_1731"/>
<dbReference type="HOGENOM" id="CLU_055599_1_0_9"/>
<dbReference type="GO" id="GO:0005737">
    <property type="term" value="C:cytoplasm"/>
    <property type="evidence" value="ECO:0007669"/>
    <property type="project" value="UniProtKB-SubCell"/>
</dbReference>
<dbReference type="GO" id="GO:0048476">
    <property type="term" value="C:Holliday junction resolvase complex"/>
    <property type="evidence" value="ECO:0007669"/>
    <property type="project" value="UniProtKB-UniRule"/>
</dbReference>
<dbReference type="GO" id="GO:0005524">
    <property type="term" value="F:ATP binding"/>
    <property type="evidence" value="ECO:0007669"/>
    <property type="project" value="UniProtKB-UniRule"/>
</dbReference>
<dbReference type="GO" id="GO:0016887">
    <property type="term" value="F:ATP hydrolysis activity"/>
    <property type="evidence" value="ECO:0007669"/>
    <property type="project" value="InterPro"/>
</dbReference>
<dbReference type="GO" id="GO:0000400">
    <property type="term" value="F:four-way junction DNA binding"/>
    <property type="evidence" value="ECO:0007669"/>
    <property type="project" value="UniProtKB-UniRule"/>
</dbReference>
<dbReference type="GO" id="GO:0009378">
    <property type="term" value="F:four-way junction helicase activity"/>
    <property type="evidence" value="ECO:0007669"/>
    <property type="project" value="InterPro"/>
</dbReference>
<dbReference type="GO" id="GO:0006310">
    <property type="term" value="P:DNA recombination"/>
    <property type="evidence" value="ECO:0007669"/>
    <property type="project" value="UniProtKB-UniRule"/>
</dbReference>
<dbReference type="GO" id="GO:0006281">
    <property type="term" value="P:DNA repair"/>
    <property type="evidence" value="ECO:0007669"/>
    <property type="project" value="UniProtKB-UniRule"/>
</dbReference>
<dbReference type="CDD" id="cd00009">
    <property type="entry name" value="AAA"/>
    <property type="match status" value="1"/>
</dbReference>
<dbReference type="Gene3D" id="1.10.8.60">
    <property type="match status" value="1"/>
</dbReference>
<dbReference type="Gene3D" id="3.40.50.300">
    <property type="entry name" value="P-loop containing nucleotide triphosphate hydrolases"/>
    <property type="match status" value="1"/>
</dbReference>
<dbReference type="Gene3D" id="1.10.10.10">
    <property type="entry name" value="Winged helix-like DNA-binding domain superfamily/Winged helix DNA-binding domain"/>
    <property type="match status" value="1"/>
</dbReference>
<dbReference type="HAMAP" id="MF_00016">
    <property type="entry name" value="DNA_HJ_migration_RuvB"/>
    <property type="match status" value="1"/>
</dbReference>
<dbReference type="InterPro" id="IPR003593">
    <property type="entry name" value="AAA+_ATPase"/>
</dbReference>
<dbReference type="InterPro" id="IPR041445">
    <property type="entry name" value="AAA_lid_4"/>
</dbReference>
<dbReference type="InterPro" id="IPR004605">
    <property type="entry name" value="DNA_helicase_Holl-junc_RuvB"/>
</dbReference>
<dbReference type="InterPro" id="IPR027417">
    <property type="entry name" value="P-loop_NTPase"/>
</dbReference>
<dbReference type="InterPro" id="IPR008824">
    <property type="entry name" value="RuvB-like_N"/>
</dbReference>
<dbReference type="InterPro" id="IPR008823">
    <property type="entry name" value="RuvB_C"/>
</dbReference>
<dbReference type="InterPro" id="IPR036388">
    <property type="entry name" value="WH-like_DNA-bd_sf"/>
</dbReference>
<dbReference type="InterPro" id="IPR036390">
    <property type="entry name" value="WH_DNA-bd_sf"/>
</dbReference>
<dbReference type="NCBIfam" id="NF000868">
    <property type="entry name" value="PRK00080.1"/>
    <property type="match status" value="1"/>
</dbReference>
<dbReference type="NCBIfam" id="TIGR00635">
    <property type="entry name" value="ruvB"/>
    <property type="match status" value="1"/>
</dbReference>
<dbReference type="PANTHER" id="PTHR42848">
    <property type="match status" value="1"/>
</dbReference>
<dbReference type="PANTHER" id="PTHR42848:SF1">
    <property type="entry name" value="HOLLIDAY JUNCTION BRANCH MIGRATION COMPLEX SUBUNIT RUVB"/>
    <property type="match status" value="1"/>
</dbReference>
<dbReference type="Pfam" id="PF17864">
    <property type="entry name" value="AAA_lid_4"/>
    <property type="match status" value="1"/>
</dbReference>
<dbReference type="Pfam" id="PF05491">
    <property type="entry name" value="RuvB_C"/>
    <property type="match status" value="1"/>
</dbReference>
<dbReference type="Pfam" id="PF05496">
    <property type="entry name" value="RuvB_N"/>
    <property type="match status" value="1"/>
</dbReference>
<dbReference type="SMART" id="SM00382">
    <property type="entry name" value="AAA"/>
    <property type="match status" value="1"/>
</dbReference>
<dbReference type="SUPFAM" id="SSF52540">
    <property type="entry name" value="P-loop containing nucleoside triphosphate hydrolases"/>
    <property type="match status" value="1"/>
</dbReference>
<dbReference type="SUPFAM" id="SSF46785">
    <property type="entry name" value="Winged helix' DNA-binding domain"/>
    <property type="match status" value="1"/>
</dbReference>
<protein>
    <recommendedName>
        <fullName evidence="1">Holliday junction branch migration complex subunit RuvB</fullName>
        <ecNumber evidence="1">3.6.4.-</ecNumber>
    </recommendedName>
</protein>
<accession>A6U2A9</accession>
<evidence type="ECO:0000255" key="1">
    <source>
        <dbReference type="HAMAP-Rule" id="MF_00016"/>
    </source>
</evidence>
<proteinExistence type="inferred from homology"/>
<feature type="chain" id="PRO_1000074104" description="Holliday junction branch migration complex subunit RuvB">
    <location>
        <begin position="1"/>
        <end position="334"/>
    </location>
</feature>
<feature type="region of interest" description="Large ATPase domain (RuvB-L)" evidence="1">
    <location>
        <begin position="1"/>
        <end position="182"/>
    </location>
</feature>
<feature type="region of interest" description="Small ATPAse domain (RuvB-S)" evidence="1">
    <location>
        <begin position="183"/>
        <end position="253"/>
    </location>
</feature>
<feature type="region of interest" description="Head domain (RuvB-H)" evidence="1">
    <location>
        <begin position="256"/>
        <end position="334"/>
    </location>
</feature>
<feature type="binding site" evidence="1">
    <location>
        <position position="21"/>
    </location>
    <ligand>
        <name>ATP</name>
        <dbReference type="ChEBI" id="CHEBI:30616"/>
    </ligand>
</feature>
<feature type="binding site" evidence="1">
    <location>
        <position position="22"/>
    </location>
    <ligand>
        <name>ATP</name>
        <dbReference type="ChEBI" id="CHEBI:30616"/>
    </ligand>
</feature>
<feature type="binding site" evidence="1">
    <location>
        <position position="63"/>
    </location>
    <ligand>
        <name>ATP</name>
        <dbReference type="ChEBI" id="CHEBI:30616"/>
    </ligand>
</feature>
<feature type="binding site" evidence="1">
    <location>
        <position position="66"/>
    </location>
    <ligand>
        <name>ATP</name>
        <dbReference type="ChEBI" id="CHEBI:30616"/>
    </ligand>
</feature>
<feature type="binding site" evidence="1">
    <location>
        <position position="67"/>
    </location>
    <ligand>
        <name>ATP</name>
        <dbReference type="ChEBI" id="CHEBI:30616"/>
    </ligand>
</feature>
<feature type="binding site" evidence="1">
    <location>
        <position position="67"/>
    </location>
    <ligand>
        <name>Mg(2+)</name>
        <dbReference type="ChEBI" id="CHEBI:18420"/>
    </ligand>
</feature>
<feature type="binding site" evidence="1">
    <location>
        <position position="68"/>
    </location>
    <ligand>
        <name>ATP</name>
        <dbReference type="ChEBI" id="CHEBI:30616"/>
    </ligand>
</feature>
<feature type="binding site" evidence="1">
    <location>
        <begin position="129"/>
        <end position="131"/>
    </location>
    <ligand>
        <name>ATP</name>
        <dbReference type="ChEBI" id="CHEBI:30616"/>
    </ligand>
</feature>
<feature type="binding site" evidence="1">
    <location>
        <position position="172"/>
    </location>
    <ligand>
        <name>ATP</name>
        <dbReference type="ChEBI" id="CHEBI:30616"/>
    </ligand>
</feature>
<feature type="binding site" evidence="1">
    <location>
        <position position="182"/>
    </location>
    <ligand>
        <name>ATP</name>
        <dbReference type="ChEBI" id="CHEBI:30616"/>
    </ligand>
</feature>
<feature type="binding site" evidence="1">
    <location>
        <position position="219"/>
    </location>
    <ligand>
        <name>ATP</name>
        <dbReference type="ChEBI" id="CHEBI:30616"/>
    </ligand>
</feature>
<feature type="binding site" evidence="1">
    <location>
        <position position="292"/>
    </location>
    <ligand>
        <name>DNA</name>
        <dbReference type="ChEBI" id="CHEBI:16991"/>
    </ligand>
</feature>
<feature type="binding site" evidence="1">
    <location>
        <position position="311"/>
    </location>
    <ligand>
        <name>DNA</name>
        <dbReference type="ChEBI" id="CHEBI:16991"/>
    </ligand>
</feature>
<feature type="binding site" evidence="1">
    <location>
        <position position="316"/>
    </location>
    <ligand>
        <name>DNA</name>
        <dbReference type="ChEBI" id="CHEBI:16991"/>
    </ligand>
</feature>
<gene>
    <name evidence="1" type="primary">ruvB</name>
    <name type="ordered locus">SaurJH1_1731</name>
</gene>
<keyword id="KW-0067">ATP-binding</keyword>
<keyword id="KW-0963">Cytoplasm</keyword>
<keyword id="KW-0227">DNA damage</keyword>
<keyword id="KW-0233">DNA recombination</keyword>
<keyword id="KW-0234">DNA repair</keyword>
<keyword id="KW-0238">DNA-binding</keyword>
<keyword id="KW-0378">Hydrolase</keyword>
<keyword id="KW-0547">Nucleotide-binding</keyword>
<comment type="function">
    <text evidence="1">The RuvA-RuvB-RuvC complex processes Holliday junction (HJ) DNA during genetic recombination and DNA repair, while the RuvA-RuvB complex plays an important role in the rescue of blocked DNA replication forks via replication fork reversal (RFR). RuvA specifically binds to HJ cruciform DNA, conferring on it an open structure. The RuvB hexamer acts as an ATP-dependent pump, pulling dsDNA into and through the RuvAB complex. RuvB forms 2 homohexamers on either side of HJ DNA bound by 1 or 2 RuvA tetramers; 4 subunits per hexamer contact DNA at a time. Coordinated motions by a converter formed by DNA-disengaged RuvB subunits stimulates ATP hydrolysis and nucleotide exchange. Immobilization of the converter enables RuvB to convert the ATP-contained energy into a lever motion, pulling 2 nucleotides of DNA out of the RuvA tetramer per ATP hydrolyzed, thus driving DNA branch migration. The RuvB motors rotate together with the DNA substrate, which together with the progressing nucleotide cycle form the mechanistic basis for DNA recombination by continuous HJ branch migration. Branch migration allows RuvC to scan DNA until it finds its consensus sequence, where it cleaves and resolves cruciform DNA.</text>
</comment>
<comment type="catalytic activity">
    <reaction evidence="1">
        <text>ATP + H2O = ADP + phosphate + H(+)</text>
        <dbReference type="Rhea" id="RHEA:13065"/>
        <dbReference type="ChEBI" id="CHEBI:15377"/>
        <dbReference type="ChEBI" id="CHEBI:15378"/>
        <dbReference type="ChEBI" id="CHEBI:30616"/>
        <dbReference type="ChEBI" id="CHEBI:43474"/>
        <dbReference type="ChEBI" id="CHEBI:456216"/>
    </reaction>
</comment>
<comment type="subunit">
    <text evidence="1">Homohexamer. Forms an RuvA(8)-RuvB(12)-Holliday junction (HJ) complex. HJ DNA is sandwiched between 2 RuvA tetramers; dsDNA enters through RuvA and exits via RuvB. An RuvB hexamer assembles on each DNA strand where it exits the tetramer. Each RuvB hexamer is contacted by two RuvA subunits (via domain III) on 2 adjacent RuvB subunits; this complex drives branch migration. In the full resolvosome a probable DNA-RuvA(4)-RuvB(12)-RuvC(2) complex forms which resolves the HJ.</text>
</comment>
<comment type="subcellular location">
    <subcellularLocation>
        <location evidence="1">Cytoplasm</location>
    </subcellularLocation>
</comment>
<comment type="domain">
    <text evidence="1">Has 3 domains, the large (RuvB-L) and small ATPase (RuvB-S) domains and the C-terminal head (RuvB-H) domain. The head domain binds DNA, while the ATPase domains jointly bind ATP, ADP or are empty depending on the state of the subunit in the translocation cycle. During a single DNA translocation step the structure of each domain remains the same, but their relative positions change.</text>
</comment>
<comment type="similarity">
    <text evidence="1">Belongs to the RuvB family.</text>
</comment>
<name>RUVB_STAA2</name>